<keyword id="KW-0106">Calcium</keyword>
<keyword id="KW-0186">Copper</keyword>
<keyword id="KW-0249">Electron transport</keyword>
<keyword id="KW-0349">Heme</keyword>
<keyword id="KW-0408">Iron</keyword>
<keyword id="KW-0472">Membrane</keyword>
<keyword id="KW-0479">Metal-binding</keyword>
<keyword id="KW-0496">Mitochondrion</keyword>
<keyword id="KW-0999">Mitochondrion inner membrane</keyword>
<keyword id="KW-0679">Respiratory chain</keyword>
<keyword id="KW-1278">Translocase</keyword>
<keyword id="KW-0812">Transmembrane</keyword>
<keyword id="KW-1133">Transmembrane helix</keyword>
<keyword id="KW-0813">Transport</keyword>
<feature type="chain" id="PRO_0000183395" description="Cytochrome c oxidase subunit 1">
    <location>
        <begin position="1" status="less than"/>
        <end position="207" status="greater than"/>
    </location>
</feature>
<feature type="transmembrane region" description="Helical; Name=1" evidence="2">
    <location>
        <begin position="1"/>
        <end position="21"/>
    </location>
</feature>
<feature type="topological domain" description="Mitochondrial intermembrane" evidence="2">
    <location>
        <begin position="22"/>
        <end position="42"/>
    </location>
</feature>
<feature type="transmembrane region" description="Helical; Name=2" evidence="2">
    <location>
        <begin position="43"/>
        <end position="63"/>
    </location>
</feature>
<feature type="topological domain" description="Mitochondrial matrix" evidence="2">
    <location>
        <begin position="64"/>
        <end position="81"/>
    </location>
</feature>
<feature type="transmembrane region" description="Helical; Name=3" evidence="2">
    <location>
        <begin position="82"/>
        <end position="102"/>
    </location>
</feature>
<feature type="topological domain" description="Mitochondrial intermembrane" evidence="2">
    <location>
        <begin position="103"/>
        <end position="124"/>
    </location>
</feature>
<feature type="transmembrane region" description="Helical; Name=4" evidence="2">
    <location>
        <begin position="125"/>
        <end position="145"/>
    </location>
</feature>
<feature type="topological domain" description="Mitochondrial matrix" evidence="2">
    <location>
        <begin position="146"/>
        <end position="162"/>
    </location>
</feature>
<feature type="transmembrane region" description="Helical; Name=5" evidence="2">
    <location>
        <begin position="163"/>
        <end position="183"/>
    </location>
</feature>
<feature type="topological domain" description="Mitochondrial intermembrane" evidence="2">
    <location>
        <begin position="184"/>
        <end position="207"/>
    </location>
</feature>
<feature type="binding site" evidence="1">
    <location>
        <position position="20"/>
    </location>
    <ligand>
        <name>Ca(2+)</name>
        <dbReference type="ChEBI" id="CHEBI:29108"/>
    </ligand>
</feature>
<feature type="binding site" evidence="1">
    <location>
        <position position="25"/>
    </location>
    <ligand>
        <name>Ca(2+)</name>
        <dbReference type="ChEBI" id="CHEBI:29108"/>
    </ligand>
</feature>
<feature type="binding site" description="axial binding residue" evidence="1">
    <location>
        <position position="41"/>
    </location>
    <ligand>
        <name>Fe(II)-heme a</name>
        <dbReference type="ChEBI" id="CHEBI:61715"/>
        <note>low-spin</note>
    </ligand>
    <ligandPart>
        <name>Fe</name>
        <dbReference type="ChEBI" id="CHEBI:18248"/>
    </ligandPart>
</feature>
<feature type="non-terminal residue">
    <location>
        <position position="1"/>
    </location>
</feature>
<feature type="non-terminal residue">
    <location>
        <position position="207"/>
    </location>
</feature>
<name>COX1_PLADA</name>
<organism>
    <name type="scientific">Planctoteuthis danae</name>
    <name type="common">Oceanic squid</name>
    <name type="synonym">Valbyteuthis danae</name>
    <dbReference type="NCBI Taxonomy" id="78439"/>
    <lineage>
        <taxon>Eukaryota</taxon>
        <taxon>Metazoa</taxon>
        <taxon>Spiralia</taxon>
        <taxon>Lophotrochozoa</taxon>
        <taxon>Mollusca</taxon>
        <taxon>Cephalopoda</taxon>
        <taxon>Coleoidea</taxon>
        <taxon>Decapodiformes</taxon>
        <taxon>Oegopsida</taxon>
        <taxon>Chiroteuthidae</taxon>
        <taxon>Planctoteuthis</taxon>
    </lineage>
</organism>
<dbReference type="EC" id="7.1.1.9"/>
<dbReference type="EMBL" id="AF075410">
    <property type="protein sequence ID" value="AAD46717.1"/>
    <property type="molecule type" value="Genomic_DNA"/>
</dbReference>
<dbReference type="SMR" id="Q9TGD8"/>
<dbReference type="UniPathway" id="UPA00705"/>
<dbReference type="GO" id="GO:0005743">
    <property type="term" value="C:mitochondrial inner membrane"/>
    <property type="evidence" value="ECO:0007669"/>
    <property type="project" value="UniProtKB-SubCell"/>
</dbReference>
<dbReference type="GO" id="GO:0004129">
    <property type="term" value="F:cytochrome-c oxidase activity"/>
    <property type="evidence" value="ECO:0007669"/>
    <property type="project" value="UniProtKB-EC"/>
</dbReference>
<dbReference type="GO" id="GO:0020037">
    <property type="term" value="F:heme binding"/>
    <property type="evidence" value="ECO:0007669"/>
    <property type="project" value="InterPro"/>
</dbReference>
<dbReference type="GO" id="GO:0046872">
    <property type="term" value="F:metal ion binding"/>
    <property type="evidence" value="ECO:0007669"/>
    <property type="project" value="UniProtKB-KW"/>
</dbReference>
<dbReference type="GO" id="GO:0015990">
    <property type="term" value="P:electron transport coupled proton transport"/>
    <property type="evidence" value="ECO:0007669"/>
    <property type="project" value="TreeGrafter"/>
</dbReference>
<dbReference type="GO" id="GO:0006123">
    <property type="term" value="P:mitochondrial electron transport, cytochrome c to oxygen"/>
    <property type="evidence" value="ECO:0007669"/>
    <property type="project" value="TreeGrafter"/>
</dbReference>
<dbReference type="Gene3D" id="1.20.210.10">
    <property type="entry name" value="Cytochrome c oxidase-like, subunit I domain"/>
    <property type="match status" value="1"/>
</dbReference>
<dbReference type="InterPro" id="IPR023616">
    <property type="entry name" value="Cyt_c_oxase-like_su1_dom"/>
</dbReference>
<dbReference type="InterPro" id="IPR036927">
    <property type="entry name" value="Cyt_c_oxase-like_su1_sf"/>
</dbReference>
<dbReference type="InterPro" id="IPR000883">
    <property type="entry name" value="Cyt_C_Oxase_1"/>
</dbReference>
<dbReference type="PANTHER" id="PTHR10422">
    <property type="entry name" value="CYTOCHROME C OXIDASE SUBUNIT 1"/>
    <property type="match status" value="1"/>
</dbReference>
<dbReference type="PANTHER" id="PTHR10422:SF18">
    <property type="entry name" value="CYTOCHROME C OXIDASE SUBUNIT 1"/>
    <property type="match status" value="1"/>
</dbReference>
<dbReference type="Pfam" id="PF00115">
    <property type="entry name" value="COX1"/>
    <property type="match status" value="1"/>
</dbReference>
<dbReference type="PRINTS" id="PR01165">
    <property type="entry name" value="CYCOXIDASEI"/>
</dbReference>
<dbReference type="SUPFAM" id="SSF81442">
    <property type="entry name" value="Cytochrome c oxidase subunit I-like"/>
    <property type="match status" value="1"/>
</dbReference>
<dbReference type="PROSITE" id="PS50855">
    <property type="entry name" value="COX1"/>
    <property type="match status" value="1"/>
</dbReference>
<evidence type="ECO:0000250" key="1">
    <source>
        <dbReference type="UniProtKB" id="P00401"/>
    </source>
</evidence>
<evidence type="ECO:0000255" key="2"/>
<evidence type="ECO:0000305" key="3"/>
<protein>
    <recommendedName>
        <fullName>Cytochrome c oxidase subunit 1</fullName>
        <ecNumber>7.1.1.9</ecNumber>
    </recommendedName>
    <alternativeName>
        <fullName>Cytochrome c oxidase polypeptide I</fullName>
    </alternativeName>
</protein>
<sequence>IFGIWAGLLGTSLSLMIRTELGQPGSLLNDDQLYNVVVTAHGFIMIFFLVMPIMIGGFGNWLVPLMLGAPDMAFPRMNNMSFWLLPPSLTLLLASSAVESGAGTGWTVYPPLSSNLSHAGPSVDLAIFSLHLAGVSSILGAINFITTILNMRWEGLQMERLPLFVWSVFITAILLLLSLPVLAGAITMLLTDRNFNTTFFDPSGGGD</sequence>
<reference key="1">
    <citation type="journal article" date="2000" name="Mol. Phylogenet. Evol.">
        <title>Phylogeny and historical biogeography of the loliginid squids (Mollusca: Cephalopoda) based on mitochondrial DNA sequence data.</title>
        <authorList>
            <person name="Anderson F.E."/>
        </authorList>
    </citation>
    <scope>NUCLEOTIDE SEQUENCE [GENOMIC DNA]</scope>
</reference>
<accession>Q9TGD8</accession>
<comment type="function">
    <text evidence="1">Component of the cytochrome c oxidase, the last enzyme in the mitochondrial electron transport chain which drives oxidative phosphorylation. The respiratory chain contains 3 multisubunit complexes succinate dehydrogenase (complex II, CII), ubiquinol-cytochrome c oxidoreductase (cytochrome b-c1 complex, complex III, CIII) and cytochrome c oxidase (complex IV, CIV), that cooperate to transfer electrons derived from NADH and succinate to molecular oxygen, creating an electrochemical gradient over the inner membrane that drives transmembrane transport and the ATP synthase. Cytochrome c oxidase is the component of the respiratory chain that catalyzes the reduction of oxygen to water. Electrons originating from reduced cytochrome c in the intermembrane space (IMS) are transferred via the dinuclear copper A center (CU(A)) of subunit 2 and heme A of subunit 1 to the active site in subunit 1, a binuclear center (BNC) formed by heme A3 and copper B (CU(B)). The BNC reduces molecular oxygen to 2 water molecules using 4 electrons from cytochrome c in the IMS and 4 protons from the mitochondrial matrix.</text>
</comment>
<comment type="catalytic activity">
    <reaction evidence="1">
        <text>4 Fe(II)-[cytochrome c] + O2 + 8 H(+)(in) = 4 Fe(III)-[cytochrome c] + 2 H2O + 4 H(+)(out)</text>
        <dbReference type="Rhea" id="RHEA:11436"/>
        <dbReference type="Rhea" id="RHEA-COMP:10350"/>
        <dbReference type="Rhea" id="RHEA-COMP:14399"/>
        <dbReference type="ChEBI" id="CHEBI:15377"/>
        <dbReference type="ChEBI" id="CHEBI:15378"/>
        <dbReference type="ChEBI" id="CHEBI:15379"/>
        <dbReference type="ChEBI" id="CHEBI:29033"/>
        <dbReference type="ChEBI" id="CHEBI:29034"/>
        <dbReference type="EC" id="7.1.1.9"/>
    </reaction>
    <physiologicalReaction direction="left-to-right" evidence="1">
        <dbReference type="Rhea" id="RHEA:11437"/>
    </physiologicalReaction>
</comment>
<comment type="cofactor">
    <cofactor evidence="1">
        <name>heme</name>
        <dbReference type="ChEBI" id="CHEBI:30413"/>
    </cofactor>
    <text evidence="1">Binds 2 heme A groups non-covalently per subunit.</text>
</comment>
<comment type="cofactor">
    <cofactor evidence="1">
        <name>Cu cation</name>
        <dbReference type="ChEBI" id="CHEBI:23378"/>
    </cofactor>
    <text evidence="1">Binds a copper B center.</text>
</comment>
<comment type="pathway">
    <text evidence="1">Energy metabolism; oxidative phosphorylation.</text>
</comment>
<comment type="subunit">
    <text evidence="1">Component of the cytochrome c oxidase (complex IV, CIV), a multisubunit enzyme composed of a catalytic core of 3 subunits and several supernumerary subunits. The complex exists as a monomer or a dimer and forms supercomplexes (SCs) in the inner mitochondrial membrane with ubiquinol-cytochrome c oxidoreductase (cytochrome b-c1 complex, complex III, CIII).</text>
</comment>
<comment type="subcellular location">
    <subcellularLocation>
        <location evidence="1">Mitochondrion inner membrane</location>
        <topology evidence="1">Multi-pass membrane protein</topology>
    </subcellularLocation>
</comment>
<comment type="similarity">
    <text evidence="3">Belongs to the heme-copper respiratory oxidase family.</text>
</comment>
<proteinExistence type="inferred from homology"/>
<geneLocation type="mitochondrion"/>
<gene>
    <name type="primary">COI</name>
</gene>